<comment type="function">
    <text evidence="1">Antibacterial peptide active against Gram-negative bacteria.</text>
</comment>
<comment type="induction">
    <text evidence="1">By bacterial infection.</text>
</comment>
<comment type="mass spectrometry"/>
<sequence>VDKPDYRPRPWPRNMI</sequence>
<keyword id="KW-0044">Antibiotic</keyword>
<keyword id="KW-0929">Antimicrobial</keyword>
<keyword id="KW-0903">Direct protein sequencing</keyword>
<keyword id="KW-0391">Immunity</keyword>
<keyword id="KW-0399">Innate immunity</keyword>
<organism>
    <name type="scientific">Palomena prasina</name>
    <name type="common">Green shield bug</name>
    <name type="synonym">Cimex prasinus</name>
    <dbReference type="NCBI Taxonomy" id="55431"/>
    <lineage>
        <taxon>Eukaryota</taxon>
        <taxon>Metazoa</taxon>
        <taxon>Ecdysozoa</taxon>
        <taxon>Arthropoda</taxon>
        <taxon>Hexapoda</taxon>
        <taxon>Insecta</taxon>
        <taxon>Pterygota</taxon>
        <taxon>Neoptera</taxon>
        <taxon>Paraneoptera</taxon>
        <taxon>Hemiptera</taxon>
        <taxon>Heteroptera</taxon>
        <taxon>Panheteroptera</taxon>
        <taxon>Pentatomomorpha</taxon>
        <taxon>Pentatomoidea</taxon>
        <taxon>Pentatomidae</taxon>
        <taxon>Pentatominae</taxon>
        <taxon>Palomena</taxon>
    </lineage>
</organism>
<accession>P80410</accession>
<dbReference type="GO" id="GO:0005576">
    <property type="term" value="C:extracellular region"/>
    <property type="evidence" value="ECO:0000314"/>
    <property type="project" value="UniProtKB"/>
</dbReference>
<dbReference type="GO" id="GO:0050829">
    <property type="term" value="P:defense response to Gram-negative bacterium"/>
    <property type="evidence" value="ECO:0000270"/>
    <property type="project" value="UniProtKB"/>
</dbReference>
<dbReference type="GO" id="GO:0045087">
    <property type="term" value="P:innate immune response"/>
    <property type="evidence" value="ECO:0007669"/>
    <property type="project" value="UniProtKB-KW"/>
</dbReference>
<name>MK2B_PALPR</name>
<feature type="peptide" id="PRO_0000044162" description="Metalnikowin-2B">
    <location>
        <begin position="1"/>
        <end position="16"/>
    </location>
</feature>
<evidence type="ECO:0000269" key="1">
    <source ref="1"/>
</evidence>
<protein>
    <recommendedName>
        <fullName>Metalnikowin-2B</fullName>
    </recommendedName>
    <alternativeName>
        <fullName>Metalnikowin IIB</fullName>
    </alternativeName>
</protein>
<reference key="1">
    <citation type="journal article" date="1996" name="J. Insect Physiol.">
        <title>The inducible antibacterial peptides of the hemipteran insect Palomena prasina: identification of a unique family of proline-rich peptides and of a novel insect defensin.</title>
        <authorList>
            <person name="Chernysh S."/>
            <person name="Cociancich S."/>
            <person name="Briand J.-P."/>
            <person name="Hetru C."/>
            <person name="Bulet P."/>
        </authorList>
    </citation>
    <scope>PROTEIN SEQUENCE</scope>
    <scope>FUNCTION</scope>
    <scope>INDUCTION</scope>
    <scope>MASS SPECTROMETRY</scope>
    <source>
        <tissue>Hemolymph</tissue>
        <tissue>Larval hemolymph</tissue>
    </source>
</reference>
<proteinExistence type="evidence at protein level"/>